<comment type="similarity">
    <text evidence="1">Belongs to the acetyltransferase family. YpeA subfamily.</text>
</comment>
<proteinExistence type="inferred from homology"/>
<reference key="1">
    <citation type="journal article" date="2004" name="Nat. Genet.">
        <title>Comparison of genome degradation in Paratyphi A and Typhi, human-restricted serovars of Salmonella enterica that cause typhoid.</title>
        <authorList>
            <person name="McClelland M."/>
            <person name="Sanderson K.E."/>
            <person name="Clifton S.W."/>
            <person name="Latreille P."/>
            <person name="Porwollik S."/>
            <person name="Sabo A."/>
            <person name="Meyer R."/>
            <person name="Bieri T."/>
            <person name="Ozersky P."/>
            <person name="McLellan M."/>
            <person name="Harkins C.R."/>
            <person name="Wang C."/>
            <person name="Nguyen C."/>
            <person name="Berghoff A."/>
            <person name="Elliott G."/>
            <person name="Kohlberg S."/>
            <person name="Strong C."/>
            <person name="Du F."/>
            <person name="Carter J."/>
            <person name="Kremizki C."/>
            <person name="Layman D."/>
            <person name="Leonard S."/>
            <person name="Sun H."/>
            <person name="Fulton L."/>
            <person name="Nash W."/>
            <person name="Miner T."/>
            <person name="Minx P."/>
            <person name="Delehaunty K."/>
            <person name="Fronick C."/>
            <person name="Magrini V."/>
            <person name="Nhan M."/>
            <person name="Warren W."/>
            <person name="Florea L."/>
            <person name="Spieth J."/>
            <person name="Wilson R.K."/>
        </authorList>
    </citation>
    <scope>NUCLEOTIDE SEQUENCE [LARGE SCALE GENOMIC DNA]</scope>
    <source>
        <strain>ATCC 9150 / SARB42</strain>
    </source>
</reference>
<accession>Q5PI26</accession>
<keyword id="KW-0012">Acyltransferase</keyword>
<keyword id="KW-0808">Transferase</keyword>
<protein>
    <recommendedName>
        <fullName evidence="1">Acetyltransferase YpeA</fullName>
        <ecNumber evidence="1">2.3.1.-</ecNumber>
    </recommendedName>
</protein>
<name>YPEA_SALPA</name>
<organism>
    <name type="scientific">Salmonella paratyphi A (strain ATCC 9150 / SARB42)</name>
    <dbReference type="NCBI Taxonomy" id="295319"/>
    <lineage>
        <taxon>Bacteria</taxon>
        <taxon>Pseudomonadati</taxon>
        <taxon>Pseudomonadota</taxon>
        <taxon>Gammaproteobacteria</taxon>
        <taxon>Enterobacterales</taxon>
        <taxon>Enterobacteriaceae</taxon>
        <taxon>Salmonella</taxon>
    </lineage>
</organism>
<sequence>MEIRVFRQEDFEEVITLWERCDLLRPWNDPEMDIERKVNHDVSLFLVAEVSGEVVGTVMGGYDGHRGSAYYLGVHPEFRGRGIANALLNRLEKKLIARGCPKIQIMVRDDNDVVLGMYERLGYEHSDALSLGKRLIEDEEY</sequence>
<gene>
    <name evidence="1" type="primary">ypeA</name>
    <name type="ordered locus">SPA0417</name>
</gene>
<feature type="chain" id="PRO_0000298444" description="Acetyltransferase YpeA">
    <location>
        <begin position="1"/>
        <end position="141"/>
    </location>
</feature>
<feature type="domain" description="N-acetyltransferase" evidence="1">
    <location>
        <begin position="1"/>
        <end position="141"/>
    </location>
</feature>
<dbReference type="EC" id="2.3.1.-" evidence="1"/>
<dbReference type="EMBL" id="CP000026">
    <property type="protein sequence ID" value="AAV76428.1"/>
    <property type="molecule type" value="Genomic_DNA"/>
</dbReference>
<dbReference type="RefSeq" id="WP_000406008.1">
    <property type="nucleotide sequence ID" value="NC_006511.1"/>
</dbReference>
<dbReference type="SMR" id="Q5PI26"/>
<dbReference type="KEGG" id="spt:SPA0417"/>
<dbReference type="HOGENOM" id="CLU_013985_34_1_6"/>
<dbReference type="Proteomes" id="UP000008185">
    <property type="component" value="Chromosome"/>
</dbReference>
<dbReference type="GO" id="GO:0016747">
    <property type="term" value="F:acyltransferase activity, transferring groups other than amino-acyl groups"/>
    <property type="evidence" value="ECO:0007669"/>
    <property type="project" value="UniProtKB-UniRule"/>
</dbReference>
<dbReference type="CDD" id="cd04301">
    <property type="entry name" value="NAT_SF"/>
    <property type="match status" value="1"/>
</dbReference>
<dbReference type="Gene3D" id="3.40.630.30">
    <property type="match status" value="1"/>
</dbReference>
<dbReference type="HAMAP" id="MF_01127">
    <property type="entry name" value="Acetyltransf_YpeA"/>
    <property type="match status" value="1"/>
</dbReference>
<dbReference type="InterPro" id="IPR023072">
    <property type="entry name" value="Acetyltransferase_YpeA"/>
</dbReference>
<dbReference type="InterPro" id="IPR017255">
    <property type="entry name" value="AcTrfase_GNAT_prd"/>
</dbReference>
<dbReference type="InterPro" id="IPR016181">
    <property type="entry name" value="Acyl_CoA_acyltransferase"/>
</dbReference>
<dbReference type="InterPro" id="IPR000182">
    <property type="entry name" value="GNAT_dom"/>
</dbReference>
<dbReference type="NCBIfam" id="NF002959">
    <property type="entry name" value="PRK03624.1"/>
    <property type="match status" value="1"/>
</dbReference>
<dbReference type="PANTHER" id="PTHR43072:SF51">
    <property type="entry name" value="ABC SUPERFAMILY TRANSPORT PROTEIN"/>
    <property type="match status" value="1"/>
</dbReference>
<dbReference type="PANTHER" id="PTHR43072">
    <property type="entry name" value="N-ACETYLTRANSFERASE"/>
    <property type="match status" value="1"/>
</dbReference>
<dbReference type="Pfam" id="PF00583">
    <property type="entry name" value="Acetyltransf_1"/>
    <property type="match status" value="1"/>
</dbReference>
<dbReference type="PIRSF" id="PIRSF037663">
    <property type="entry name" value="Acetyltransf_GNAT_prd"/>
    <property type="match status" value="1"/>
</dbReference>
<dbReference type="SUPFAM" id="SSF55729">
    <property type="entry name" value="Acyl-CoA N-acyltransferases (Nat)"/>
    <property type="match status" value="1"/>
</dbReference>
<dbReference type="PROSITE" id="PS51186">
    <property type="entry name" value="GNAT"/>
    <property type="match status" value="1"/>
</dbReference>
<evidence type="ECO:0000255" key="1">
    <source>
        <dbReference type="HAMAP-Rule" id="MF_01127"/>
    </source>
</evidence>